<accession>P00013</accession>
<proteinExistence type="evidence at protein level"/>
<name>CYC_MINSC</name>
<feature type="initiator methionine" description="Removed" evidence="2 3">
    <location>
        <position position="1"/>
    </location>
</feature>
<feature type="chain" id="PRO_0000108223" description="Cytochrome c">
    <location>
        <begin position="2"/>
        <end position="105"/>
    </location>
</feature>
<feature type="binding site" description="covalent">
    <location>
        <position position="15"/>
    </location>
    <ligand>
        <name>heme c</name>
        <dbReference type="ChEBI" id="CHEBI:61717"/>
    </ligand>
</feature>
<feature type="binding site" description="covalent">
    <location>
        <position position="18"/>
    </location>
    <ligand>
        <name>heme c</name>
        <dbReference type="ChEBI" id="CHEBI:61717"/>
    </ligand>
</feature>
<feature type="binding site" description="axial binding residue">
    <location>
        <position position="19"/>
    </location>
    <ligand>
        <name>heme c</name>
        <dbReference type="ChEBI" id="CHEBI:61717"/>
    </ligand>
    <ligandPart>
        <name>Fe</name>
        <dbReference type="ChEBI" id="CHEBI:18248"/>
    </ligandPart>
</feature>
<feature type="binding site" description="axial binding residue">
    <location>
        <position position="81"/>
    </location>
    <ligand>
        <name>heme c</name>
        <dbReference type="ChEBI" id="CHEBI:61717"/>
    </ligand>
    <ligandPart>
        <name>Fe</name>
        <dbReference type="ChEBI" id="CHEBI:18248"/>
    </ligandPart>
</feature>
<feature type="modified residue" description="N-acetylglycine" evidence="3">
    <location>
        <position position="2"/>
    </location>
</feature>
<feature type="modified residue" description="Phosphotyrosine" evidence="3">
    <location>
        <position position="49"/>
    </location>
</feature>
<feature type="modified residue" description="N6-succinyllysine" evidence="4">
    <location>
        <position position="56"/>
    </location>
</feature>
<feature type="modified residue" description="N6-acetyllysine; alternate" evidence="4">
    <location>
        <position position="73"/>
    </location>
</feature>
<feature type="modified residue" description="N6-succinyllysine; alternate" evidence="4">
    <location>
        <position position="73"/>
    </location>
</feature>
<feature type="modified residue" description="Phosphotyrosine" evidence="3">
    <location>
        <position position="98"/>
    </location>
</feature>
<feature type="modified residue" description="N6-acetyllysine" evidence="4">
    <location>
        <position position="100"/>
    </location>
</feature>
<keyword id="KW-0007">Acetylation</keyword>
<keyword id="KW-0053">Apoptosis</keyword>
<keyword id="KW-0903">Direct protein sequencing</keyword>
<keyword id="KW-0249">Electron transport</keyword>
<keyword id="KW-0349">Heme</keyword>
<keyword id="KW-0408">Iron</keyword>
<keyword id="KW-0479">Metal-binding</keyword>
<keyword id="KW-0496">Mitochondrion</keyword>
<keyword id="KW-0597">Phosphoprotein</keyword>
<keyword id="KW-0679">Respiratory chain</keyword>
<keyword id="KW-0813">Transport</keyword>
<organism>
    <name type="scientific">Miniopterus schreibersii</name>
    <name type="common">Schreibers's long-fingered bat</name>
    <name type="synonym">Vespertilio schreibersii</name>
    <dbReference type="NCBI Taxonomy" id="9433"/>
    <lineage>
        <taxon>Eukaryota</taxon>
        <taxon>Metazoa</taxon>
        <taxon>Chordata</taxon>
        <taxon>Craniata</taxon>
        <taxon>Vertebrata</taxon>
        <taxon>Euteleostomi</taxon>
        <taxon>Mammalia</taxon>
        <taxon>Eutheria</taxon>
        <taxon>Laurasiatheria</taxon>
        <taxon>Chiroptera</taxon>
        <taxon>Yangochiroptera</taxon>
        <taxon>Miniopteridae</taxon>
        <taxon>Miniopterus</taxon>
    </lineage>
</organism>
<reference key="1">
    <citation type="journal article" date="1972" name="Comp. Biochem. Physiol.">
        <title>The amino acid sequence of bat (Miniopteris schreibersi) cytochrome C.</title>
        <authorList>
            <person name="Strydom D.J."/>
            <person name="van der Walt S.J."/>
            <person name="Botes D.P."/>
        </authorList>
    </citation>
    <scope>PRELIMINARY PROTEIN SEQUENCE OF 2-105</scope>
    <scope>PROTEIN SEQUENCE OF 61-63 AND 89-92</scope>
</reference>
<comment type="function">
    <text>Electron carrier protein. The oxidized form of the cytochrome c heme group can accept an electron from the heme group of the cytochrome c1 subunit of cytochrome reductase. Cytochrome c then transfers this electron to the cytochrome oxidase complex, the final protein carrier in the mitochondrial electron-transport chain.</text>
</comment>
<comment type="function">
    <text evidence="1">Plays a role in apoptosis. Suppression of the anti-apoptotic members or activation of the pro-apoptotic members of the Bcl-2 family leads to altered mitochondrial membrane permeability resulting in release of cytochrome c into the cytosol. Binding of cytochrome c to Apaf-1 triggers the activation of caspase-9, which then accelerates apoptosis by activating other caspases (By similarity).</text>
</comment>
<comment type="subcellular location">
    <subcellularLocation>
        <location>Mitochondrion intermembrane space</location>
    </subcellularLocation>
    <text>Loosely associated with the inner membrane.</text>
</comment>
<comment type="PTM">
    <text>Binds 1 heme c group covalently per subunit.</text>
</comment>
<comment type="PTM">
    <text evidence="1">Phosphorylation at Tyr-49 and Tyr-98 both reduce by half the turnover in the reaction with cytochrome c oxidase, down-regulating mitochondrial respiration.</text>
</comment>
<comment type="similarity">
    <text evidence="5">Belongs to the cytochrome c family.</text>
</comment>
<comment type="online information" name="Protein Spotlight">
    <link uri="https://www.proteinspotlight.org/back_issues/076"/>
    <text>Life shuttle - Issue 76 of November 2006</text>
</comment>
<dbReference type="PIR" id="A04614">
    <property type="entry name" value="CCBTS"/>
</dbReference>
<dbReference type="SMR" id="P00013"/>
<dbReference type="GO" id="GO:0005829">
    <property type="term" value="C:cytosol"/>
    <property type="evidence" value="ECO:0000250"/>
    <property type="project" value="UniProtKB"/>
</dbReference>
<dbReference type="GO" id="GO:0005758">
    <property type="term" value="C:mitochondrial intermembrane space"/>
    <property type="evidence" value="ECO:0007669"/>
    <property type="project" value="UniProtKB-SubCell"/>
</dbReference>
<dbReference type="GO" id="GO:0009055">
    <property type="term" value="F:electron transfer activity"/>
    <property type="evidence" value="ECO:0007669"/>
    <property type="project" value="InterPro"/>
</dbReference>
<dbReference type="GO" id="GO:0020037">
    <property type="term" value="F:heme binding"/>
    <property type="evidence" value="ECO:0007669"/>
    <property type="project" value="InterPro"/>
</dbReference>
<dbReference type="GO" id="GO:0046872">
    <property type="term" value="F:metal ion binding"/>
    <property type="evidence" value="ECO:0007669"/>
    <property type="project" value="UniProtKB-KW"/>
</dbReference>
<dbReference type="GO" id="GO:0006915">
    <property type="term" value="P:apoptotic process"/>
    <property type="evidence" value="ECO:0007669"/>
    <property type="project" value="UniProtKB-KW"/>
</dbReference>
<dbReference type="FunFam" id="1.10.760.10:FF:000008">
    <property type="entry name" value="Cytochrome c"/>
    <property type="match status" value="1"/>
</dbReference>
<dbReference type="Gene3D" id="1.10.760.10">
    <property type="entry name" value="Cytochrome c-like domain"/>
    <property type="match status" value="1"/>
</dbReference>
<dbReference type="InterPro" id="IPR009056">
    <property type="entry name" value="Cyt_c-like_dom"/>
</dbReference>
<dbReference type="InterPro" id="IPR036909">
    <property type="entry name" value="Cyt_c-like_dom_sf"/>
</dbReference>
<dbReference type="InterPro" id="IPR002327">
    <property type="entry name" value="Cyt_c_1A/1B"/>
</dbReference>
<dbReference type="PANTHER" id="PTHR11961">
    <property type="entry name" value="CYTOCHROME C"/>
    <property type="match status" value="1"/>
</dbReference>
<dbReference type="Pfam" id="PF00034">
    <property type="entry name" value="Cytochrom_C"/>
    <property type="match status" value="1"/>
</dbReference>
<dbReference type="PRINTS" id="PR00604">
    <property type="entry name" value="CYTCHRMECIAB"/>
</dbReference>
<dbReference type="SUPFAM" id="SSF46626">
    <property type="entry name" value="Cytochrome c"/>
    <property type="match status" value="1"/>
</dbReference>
<dbReference type="PROSITE" id="PS51007">
    <property type="entry name" value="CYTC"/>
    <property type="match status" value="1"/>
</dbReference>
<protein>
    <recommendedName>
        <fullName>Cytochrome c</fullName>
    </recommendedName>
</protein>
<evidence type="ECO:0000250" key="1"/>
<evidence type="ECO:0000250" key="2">
    <source>
        <dbReference type="UniProtKB" id="P00003"/>
    </source>
</evidence>
<evidence type="ECO:0000250" key="3">
    <source>
        <dbReference type="UniProtKB" id="P62894"/>
    </source>
</evidence>
<evidence type="ECO:0000250" key="4">
    <source>
        <dbReference type="UniProtKB" id="P62897"/>
    </source>
</evidence>
<evidence type="ECO:0000305" key="5"/>
<gene>
    <name type="primary">CYCS</name>
    <name type="synonym">CYC</name>
</gene>
<sequence length="105" mass="11574">MGDVEKGKKIFVQKCAQCHTVEKGGKHKTGPNLHGLFGRKTGQAPGFSYTDANKNKGITWGEATLMEYLENPKKYIPGTKMIFAGIKKSAERADLIAYLKKATKE</sequence>